<comment type="similarity">
    <text evidence="1">Belongs to the iron-sulfur cluster assembly SufBD family.</text>
</comment>
<name>Y2365_ARCFU</name>
<evidence type="ECO:0000305" key="1"/>
<accession>O30305</accession>
<protein>
    <recommendedName>
        <fullName>Iron-sulfur cluster assembly SufBD family protein AF_2365</fullName>
    </recommendedName>
</protein>
<proteinExistence type="inferred from homology"/>
<reference key="1">
    <citation type="journal article" date="1997" name="Nature">
        <title>The complete genome sequence of the hyperthermophilic, sulphate-reducing archaeon Archaeoglobus fulgidus.</title>
        <authorList>
            <person name="Klenk H.-P."/>
            <person name="Clayton R.A."/>
            <person name="Tomb J.-F."/>
            <person name="White O."/>
            <person name="Nelson K.E."/>
            <person name="Ketchum K.A."/>
            <person name="Dodson R.J."/>
            <person name="Gwinn M.L."/>
            <person name="Hickey E.K."/>
            <person name="Peterson J.D."/>
            <person name="Richardson D.L."/>
            <person name="Kerlavage A.R."/>
            <person name="Graham D.E."/>
            <person name="Kyrpides N.C."/>
            <person name="Fleischmann R.D."/>
            <person name="Quackenbush J."/>
            <person name="Lee N.H."/>
            <person name="Sutton G.G."/>
            <person name="Gill S.R."/>
            <person name="Kirkness E.F."/>
            <person name="Dougherty B.A."/>
            <person name="McKenney K."/>
            <person name="Adams M.D."/>
            <person name="Loftus B.J."/>
            <person name="Peterson S.N."/>
            <person name="Reich C.I."/>
            <person name="McNeil L.K."/>
            <person name="Badger J.H."/>
            <person name="Glodek A."/>
            <person name="Zhou L."/>
            <person name="Overbeek R."/>
            <person name="Gocayne J.D."/>
            <person name="Weidman J.F."/>
            <person name="McDonald L.A."/>
            <person name="Utterback T.R."/>
            <person name="Cotton M.D."/>
            <person name="Spriggs T."/>
            <person name="Artiach P."/>
            <person name="Kaine B.P."/>
            <person name="Sykes S.M."/>
            <person name="Sadow P.W."/>
            <person name="D'Andrea K.P."/>
            <person name="Bowman C."/>
            <person name="Fujii C."/>
            <person name="Garland S.A."/>
            <person name="Mason T.M."/>
            <person name="Olsen G.J."/>
            <person name="Fraser C.M."/>
            <person name="Smith H.O."/>
            <person name="Woese C.R."/>
            <person name="Venter J.C."/>
        </authorList>
    </citation>
    <scope>NUCLEOTIDE SEQUENCE [LARGE SCALE GENOMIC DNA]</scope>
    <source>
        <strain>ATCC 49558 / DSM 4304 / JCM 9628 / NBRC 100126 / VC-16</strain>
    </source>
</reference>
<keyword id="KW-1185">Reference proteome</keyword>
<organism>
    <name type="scientific">Archaeoglobus fulgidus (strain ATCC 49558 / DSM 4304 / JCM 9628 / NBRC 100126 / VC-16)</name>
    <dbReference type="NCBI Taxonomy" id="224325"/>
    <lineage>
        <taxon>Archaea</taxon>
        <taxon>Methanobacteriati</taxon>
        <taxon>Methanobacteriota</taxon>
        <taxon>Archaeoglobi</taxon>
        <taxon>Archaeoglobales</taxon>
        <taxon>Archaeoglobaceae</taxon>
        <taxon>Archaeoglobus</taxon>
    </lineage>
</organism>
<sequence length="369" mass="41110">MFGEMSGEYGELGVDKERLKEVGIELDKSKRSGVYLQEDQDAKTFSSFFEGVEVMSIKQAMEKYDWVKDYFWKILRKDQDEFTRMADTEDVNGYFIRSLPGAKVEIPVEACLYLKKVEKQRVHNIVIAEEGSELNIISGCTSHPGVAGMHIGISEFFVKKNAKLSFTMIHSWDTTIEVRPRTAIKVEEGGTFISNYILLNPVKLVQTYPTAYVEKDATAIFNSVIVALEGSVVDSGSRAVLMGENSRAEIISRTISKGGKIIARGHIIGDAPEVKGHLECKGLMLSESGLIDAIPELEARYPNVELSHEAAIGKIAEEGIFYLMSRGLSRDEAISAIVRGFMEIEIKGLPEALQEAIRRTIEMAERDLL</sequence>
<dbReference type="EMBL" id="AE000782">
    <property type="protein sequence ID" value="AAB91300.1"/>
    <property type="molecule type" value="Genomic_DNA"/>
</dbReference>
<dbReference type="PIR" id="E69545">
    <property type="entry name" value="E69545"/>
</dbReference>
<dbReference type="SMR" id="O30305"/>
<dbReference type="STRING" id="224325.AF_2365"/>
<dbReference type="PaxDb" id="224325-AF_2365"/>
<dbReference type="EnsemblBacteria" id="AAB91300">
    <property type="protein sequence ID" value="AAB91300"/>
    <property type="gene ID" value="AF_2365"/>
</dbReference>
<dbReference type="KEGG" id="afu:AF_2365"/>
<dbReference type="eggNOG" id="arCOG01715">
    <property type="taxonomic scope" value="Archaea"/>
</dbReference>
<dbReference type="HOGENOM" id="CLU_026231_0_1_2"/>
<dbReference type="PhylomeDB" id="O30305"/>
<dbReference type="Proteomes" id="UP000002199">
    <property type="component" value="Chromosome"/>
</dbReference>
<dbReference type="GO" id="GO:0016226">
    <property type="term" value="P:iron-sulfur cluster assembly"/>
    <property type="evidence" value="ECO:0007669"/>
    <property type="project" value="InterPro"/>
</dbReference>
<dbReference type="InterPro" id="IPR055346">
    <property type="entry name" value="Fe-S_cluster_assembly_SufBD"/>
</dbReference>
<dbReference type="InterPro" id="IPR000825">
    <property type="entry name" value="SUF_FeS_clus_asmbl_SufBD_core"/>
</dbReference>
<dbReference type="InterPro" id="IPR037284">
    <property type="entry name" value="SUF_FeS_clus_asmbl_SufBD_sf"/>
</dbReference>
<dbReference type="PANTHER" id="PTHR30508">
    <property type="entry name" value="FES CLUSTER ASSEMBLY PROTEIN SUF"/>
    <property type="match status" value="1"/>
</dbReference>
<dbReference type="PANTHER" id="PTHR30508:SF1">
    <property type="entry name" value="UPF0051 PROTEIN ABCI8, CHLOROPLASTIC-RELATED"/>
    <property type="match status" value="1"/>
</dbReference>
<dbReference type="Pfam" id="PF01458">
    <property type="entry name" value="SUFBD_core"/>
    <property type="match status" value="1"/>
</dbReference>
<dbReference type="SUPFAM" id="SSF101960">
    <property type="entry name" value="Stabilizer of iron transporter SufD"/>
    <property type="match status" value="1"/>
</dbReference>
<feature type="chain" id="PRO_0000147378" description="Iron-sulfur cluster assembly SufBD family protein AF_2365">
    <location>
        <begin position="1"/>
        <end position="369"/>
    </location>
</feature>
<gene>
    <name type="ordered locus">AF_2365</name>
</gene>